<organism>
    <name type="scientific">Shigella flexneri</name>
    <dbReference type="NCBI Taxonomy" id="623"/>
    <lineage>
        <taxon>Bacteria</taxon>
        <taxon>Pseudomonadati</taxon>
        <taxon>Pseudomonadota</taxon>
        <taxon>Gammaproteobacteria</taxon>
        <taxon>Enterobacterales</taxon>
        <taxon>Enterobacteriaceae</taxon>
        <taxon>Shigella</taxon>
    </lineage>
</organism>
<reference key="1">
    <citation type="journal article" date="2002" name="Nucleic Acids Res.">
        <title>Genome sequence of Shigella flexneri 2a: insights into pathogenicity through comparison with genomes of Escherichia coli K12 and O157.</title>
        <authorList>
            <person name="Jin Q."/>
            <person name="Yuan Z."/>
            <person name="Xu J."/>
            <person name="Wang Y."/>
            <person name="Shen Y."/>
            <person name="Lu W."/>
            <person name="Wang J."/>
            <person name="Liu H."/>
            <person name="Yang J."/>
            <person name="Yang F."/>
            <person name="Zhang X."/>
            <person name="Zhang J."/>
            <person name="Yang G."/>
            <person name="Wu H."/>
            <person name="Qu D."/>
            <person name="Dong J."/>
            <person name="Sun L."/>
            <person name="Xue Y."/>
            <person name="Zhao A."/>
            <person name="Gao Y."/>
            <person name="Zhu J."/>
            <person name="Kan B."/>
            <person name="Ding K."/>
            <person name="Chen S."/>
            <person name="Cheng H."/>
            <person name="Yao Z."/>
            <person name="He B."/>
            <person name="Chen R."/>
            <person name="Ma D."/>
            <person name="Qiang B."/>
            <person name="Wen Y."/>
            <person name="Hou Y."/>
            <person name="Yu J."/>
        </authorList>
    </citation>
    <scope>NUCLEOTIDE SEQUENCE [LARGE SCALE GENOMIC DNA]</scope>
    <source>
        <strain>301 / Serotype 2a</strain>
    </source>
</reference>
<reference key="2">
    <citation type="journal article" date="2003" name="Infect. Immun.">
        <title>Complete genome sequence and comparative genomics of Shigella flexneri serotype 2a strain 2457T.</title>
        <authorList>
            <person name="Wei J."/>
            <person name="Goldberg M.B."/>
            <person name="Burland V."/>
            <person name="Venkatesan M.M."/>
            <person name="Deng W."/>
            <person name="Fournier G."/>
            <person name="Mayhew G.F."/>
            <person name="Plunkett G. III"/>
            <person name="Rose D.J."/>
            <person name="Darling A."/>
            <person name="Mau B."/>
            <person name="Perna N.T."/>
            <person name="Payne S.M."/>
            <person name="Runyen-Janecky L.J."/>
            <person name="Zhou S."/>
            <person name="Schwartz D.C."/>
            <person name="Blattner F.R."/>
        </authorList>
    </citation>
    <scope>NUCLEOTIDE SEQUENCE [LARGE SCALE GENOMIC DNA]</scope>
    <source>
        <strain>ATCC 700930 / 2457T / Serotype 2a</strain>
    </source>
</reference>
<comment type="function">
    <text evidence="1">Part of the high-affinity ATP-driven potassium transport (or Kdp) system, which catalyzes the hydrolysis of ATP coupled with the electrogenic transport of potassium into the cytoplasm. This subunit binds the periplasmic potassium ions and delivers the ions to the membrane domain of KdpB through an intramembrane tunnel.</text>
</comment>
<comment type="subunit">
    <text evidence="1">The system is composed of three essential subunits: KdpA, KdpB and KdpC.</text>
</comment>
<comment type="subcellular location">
    <subcellularLocation>
        <location evidence="1">Cell inner membrane</location>
        <topology evidence="1">Multi-pass membrane protein</topology>
    </subcellularLocation>
</comment>
<comment type="similarity">
    <text evidence="1">Belongs to the KdpA family.</text>
</comment>
<gene>
    <name evidence="1" type="primary">kdpA</name>
    <name type="ordered locus">SF0598</name>
    <name type="ordered locus">S0609</name>
</gene>
<proteinExistence type="inferred from homology"/>
<name>KDPA_SHIFL</name>
<protein>
    <recommendedName>
        <fullName evidence="1">Potassium-transporting ATPase potassium-binding subunit</fullName>
    </recommendedName>
    <alternativeName>
        <fullName evidence="1">ATP phosphohydrolase [potassium-transporting] A chain</fullName>
    </alternativeName>
    <alternativeName>
        <fullName evidence="1">Potassium-binding and translocating subunit A</fullName>
    </alternativeName>
    <alternativeName>
        <fullName evidence="1">Potassium-translocating ATPase A chain</fullName>
    </alternativeName>
</protein>
<sequence>MAAQGFLLIATFLLVLMVLARPLGSGLARLINDIPLPGTAGVERILFRLPGVSDHEMNWKQYLCAILGLNMLGLAVLFFMLLGQHYLPLNPQQLPGLSWDLALNTAVSFVTNTNWQSYSGETTLSYFSQMAGLTVQNFLSAASGIAVIFAFIRAFTRQSMSTLGNAWVDLLRITLWVLVPVALLIALFFIQQGAQQNFLPYQAVNTVEGAQQLLPMGPVASQEAIKMLGTNGGGFFNANSSHPFENPTALTNFVQMLAIFLIPTALCFAFGEVTGDRRQGRMLLWAMSVIFVICVGVVMWAEVQGNPHLLALGADSSINMEGKESRFGVLVSSLFAVVTTAASCGAVIAMHDSFTALGGMVPMWLMQIGEVVFGGVGSGLYGMMLFVLLAVFIAGLMIGRTPEYLGKKIDVREMKLTALAILVTPTLVLMGAALAMMTDAGRSAMLNPSPHGFSEVLYAVSSAANNNGSAFAGLSANSPFWNCLLAFCMFVGRFGVIIPVMAIAGSLVSKKSQPASSGTLPTHGPLFVGLLIGTVLLVGALTFIPALALGPVAEYLS</sequence>
<dbReference type="EMBL" id="AE005674">
    <property type="protein sequence ID" value="AAN42240.2"/>
    <property type="molecule type" value="Genomic_DNA"/>
</dbReference>
<dbReference type="EMBL" id="AE014073">
    <property type="protein sequence ID" value="AAP16111.1"/>
    <property type="molecule type" value="Genomic_DNA"/>
</dbReference>
<dbReference type="RefSeq" id="NP_706533.2">
    <property type="nucleotide sequence ID" value="NC_004337.2"/>
</dbReference>
<dbReference type="RefSeq" id="WP_000730110.1">
    <property type="nucleotide sequence ID" value="NZ_WPGW01000002.1"/>
</dbReference>
<dbReference type="SMR" id="Q83S83"/>
<dbReference type="STRING" id="198214.SF0598"/>
<dbReference type="PaxDb" id="198214-SF0598"/>
<dbReference type="GeneID" id="1023557"/>
<dbReference type="KEGG" id="sfl:SF0598"/>
<dbReference type="KEGG" id="sfx:S0609"/>
<dbReference type="PATRIC" id="fig|198214.7.peg.695"/>
<dbReference type="HOGENOM" id="CLU_018614_3_0_6"/>
<dbReference type="Proteomes" id="UP000001006">
    <property type="component" value="Chromosome"/>
</dbReference>
<dbReference type="Proteomes" id="UP000002673">
    <property type="component" value="Chromosome"/>
</dbReference>
<dbReference type="GO" id="GO:0005886">
    <property type="term" value="C:plasma membrane"/>
    <property type="evidence" value="ECO:0007669"/>
    <property type="project" value="UniProtKB-SubCell"/>
</dbReference>
<dbReference type="GO" id="GO:0008556">
    <property type="term" value="F:P-type potassium transmembrane transporter activity"/>
    <property type="evidence" value="ECO:0007669"/>
    <property type="project" value="InterPro"/>
</dbReference>
<dbReference type="GO" id="GO:0030955">
    <property type="term" value="F:potassium ion binding"/>
    <property type="evidence" value="ECO:0007669"/>
    <property type="project" value="UniProtKB-UniRule"/>
</dbReference>
<dbReference type="HAMAP" id="MF_00275">
    <property type="entry name" value="KdpA"/>
    <property type="match status" value="1"/>
</dbReference>
<dbReference type="InterPro" id="IPR004623">
    <property type="entry name" value="KdpA"/>
</dbReference>
<dbReference type="NCBIfam" id="TIGR00680">
    <property type="entry name" value="kdpA"/>
    <property type="match status" value="1"/>
</dbReference>
<dbReference type="PANTHER" id="PTHR30607">
    <property type="entry name" value="POTASSIUM-TRANSPORTING ATPASE A CHAIN"/>
    <property type="match status" value="1"/>
</dbReference>
<dbReference type="PANTHER" id="PTHR30607:SF2">
    <property type="entry name" value="POTASSIUM-TRANSPORTING ATPASE POTASSIUM-BINDING SUBUNIT"/>
    <property type="match status" value="1"/>
</dbReference>
<dbReference type="Pfam" id="PF03814">
    <property type="entry name" value="KdpA"/>
    <property type="match status" value="1"/>
</dbReference>
<dbReference type="PIRSF" id="PIRSF001294">
    <property type="entry name" value="K_ATPaseA"/>
    <property type="match status" value="1"/>
</dbReference>
<feature type="chain" id="PRO_0000166523" description="Potassium-transporting ATPase potassium-binding subunit">
    <location>
        <begin position="1"/>
        <end position="557"/>
    </location>
</feature>
<feature type="transmembrane region" description="Helical" evidence="1">
    <location>
        <begin position="5"/>
        <end position="25"/>
    </location>
</feature>
<feature type="transmembrane region" description="Helical" evidence="1">
    <location>
        <begin position="63"/>
        <end position="83"/>
    </location>
</feature>
<feature type="transmembrane region" description="Helical" evidence="1">
    <location>
        <begin position="132"/>
        <end position="152"/>
    </location>
</feature>
<feature type="transmembrane region" description="Helical" evidence="1">
    <location>
        <begin position="170"/>
        <end position="190"/>
    </location>
</feature>
<feature type="transmembrane region" description="Helical" evidence="1">
    <location>
        <begin position="253"/>
        <end position="273"/>
    </location>
</feature>
<feature type="transmembrane region" description="Helical" evidence="1">
    <location>
        <begin position="283"/>
        <end position="303"/>
    </location>
</feature>
<feature type="transmembrane region" description="Helical" evidence="1">
    <location>
        <begin position="329"/>
        <end position="349"/>
    </location>
</feature>
<feature type="transmembrane region" description="Helical" evidence="1">
    <location>
        <begin position="356"/>
        <end position="376"/>
    </location>
</feature>
<feature type="transmembrane region" description="Helical" evidence="1">
    <location>
        <begin position="379"/>
        <end position="399"/>
    </location>
</feature>
<feature type="transmembrane region" description="Helical" evidence="1">
    <location>
        <begin position="416"/>
        <end position="436"/>
    </location>
</feature>
<feature type="transmembrane region" description="Helical" evidence="1">
    <location>
        <begin position="484"/>
        <end position="504"/>
    </location>
</feature>
<feature type="transmembrane region" description="Helical" evidence="1">
    <location>
        <begin position="526"/>
        <end position="546"/>
    </location>
</feature>
<keyword id="KW-0997">Cell inner membrane</keyword>
<keyword id="KW-1003">Cell membrane</keyword>
<keyword id="KW-0406">Ion transport</keyword>
<keyword id="KW-0472">Membrane</keyword>
<keyword id="KW-0630">Potassium</keyword>
<keyword id="KW-0633">Potassium transport</keyword>
<keyword id="KW-1185">Reference proteome</keyword>
<keyword id="KW-0812">Transmembrane</keyword>
<keyword id="KW-1133">Transmembrane helix</keyword>
<keyword id="KW-0813">Transport</keyword>
<evidence type="ECO:0000255" key="1">
    <source>
        <dbReference type="HAMAP-Rule" id="MF_00275"/>
    </source>
</evidence>
<accession>Q83S83</accession>
<accession>Q7UDE2</accession>